<reference key="1">
    <citation type="submission" date="2005-08" db="EMBL/GenBank/DDBJ databases">
        <authorList>
            <consortium name="NIH - Mammalian Gene Collection (MGC) project"/>
        </authorList>
    </citation>
    <scope>NUCLEOTIDE SEQUENCE [LARGE SCALE MRNA]</scope>
    <source>
        <strain>Crossbred X Angus</strain>
        <tissue>Liver</tissue>
    </source>
</reference>
<proteinExistence type="evidence at transcript level"/>
<name>IPP2_BOVIN</name>
<evidence type="ECO:0000250" key="1"/>
<evidence type="ECO:0000250" key="2">
    <source>
        <dbReference type="UniProtKB" id="P11845"/>
    </source>
</evidence>
<evidence type="ECO:0000250" key="3">
    <source>
        <dbReference type="UniProtKB" id="P41236"/>
    </source>
</evidence>
<evidence type="ECO:0000250" key="4">
    <source>
        <dbReference type="UniProtKB" id="Q9DCL8"/>
    </source>
</evidence>
<evidence type="ECO:0000256" key="5">
    <source>
        <dbReference type="SAM" id="MobiDB-lite"/>
    </source>
</evidence>
<evidence type="ECO:0000305" key="6"/>
<sequence length="207" mass="22982">MAASTASHRPIKGILKNKSSTTSSVVSTAEQPGKSVDEELSKKSQKWDEMSILATYHPADKDYGLMKIDEPSTPYHSMVADDEDALSDSETTEALTPDILARKLTAAAAESLEPKYRVREQESSGDEDSDLSPEEREKKRQFEMKRKLHYNEGLNIKLARQLISKDLNDEEEDEEMSETAAGESMNMEESSQGSATSDQLQNKSQSS</sequence>
<keyword id="KW-0007">Acetylation</keyword>
<keyword id="KW-0119">Carbohydrate metabolism</keyword>
<keyword id="KW-0321">Glycogen metabolism</keyword>
<keyword id="KW-0597">Phosphoprotein</keyword>
<keyword id="KW-0650">Protein phosphatase inhibitor</keyword>
<keyword id="KW-1185">Reference proteome</keyword>
<dbReference type="EMBL" id="BC102669">
    <property type="protein sequence ID" value="AAI02670.1"/>
    <property type="molecule type" value="mRNA"/>
</dbReference>
<dbReference type="RefSeq" id="NP_001030469.1">
    <property type="nucleotide sequence ID" value="NM_001035392.2"/>
</dbReference>
<dbReference type="FunCoup" id="Q3SZX2">
    <property type="interactions" value="793"/>
</dbReference>
<dbReference type="STRING" id="9913.ENSBTAP00000001128"/>
<dbReference type="PaxDb" id="9913-ENSBTAP00000001128"/>
<dbReference type="PeptideAtlas" id="Q3SZX2"/>
<dbReference type="GeneID" id="532726"/>
<dbReference type="KEGG" id="bta:532726"/>
<dbReference type="CTD" id="5504"/>
<dbReference type="eggNOG" id="KOG4041">
    <property type="taxonomic scope" value="Eukaryota"/>
</dbReference>
<dbReference type="InParanoid" id="Q3SZX2"/>
<dbReference type="OrthoDB" id="551302at2759"/>
<dbReference type="Proteomes" id="UP000009136">
    <property type="component" value="Unplaced"/>
</dbReference>
<dbReference type="GO" id="GO:0004864">
    <property type="term" value="F:protein phosphatase inhibitor activity"/>
    <property type="evidence" value="ECO:0000318"/>
    <property type="project" value="GO_Central"/>
</dbReference>
<dbReference type="GO" id="GO:0005977">
    <property type="term" value="P:glycogen metabolic process"/>
    <property type="evidence" value="ECO:0007669"/>
    <property type="project" value="UniProtKB-KW"/>
</dbReference>
<dbReference type="GO" id="GO:0035556">
    <property type="term" value="P:intracellular signal transduction"/>
    <property type="evidence" value="ECO:0000318"/>
    <property type="project" value="GO_Central"/>
</dbReference>
<dbReference type="GO" id="GO:0009966">
    <property type="term" value="P:regulation of signal transduction"/>
    <property type="evidence" value="ECO:0007669"/>
    <property type="project" value="InterPro"/>
</dbReference>
<dbReference type="Gene3D" id="6.10.250.1050">
    <property type="match status" value="2"/>
</dbReference>
<dbReference type="InterPro" id="IPR007062">
    <property type="entry name" value="PPI-2"/>
</dbReference>
<dbReference type="PANTHER" id="PTHR12398">
    <property type="entry name" value="PROTEIN PHOSPHATASE INHIBITOR"/>
    <property type="match status" value="1"/>
</dbReference>
<dbReference type="PANTHER" id="PTHR12398:SF35">
    <property type="entry name" value="PROTEIN PHOSPHATASE INHIBITOR 2-RELATED"/>
    <property type="match status" value="1"/>
</dbReference>
<dbReference type="Pfam" id="PF04979">
    <property type="entry name" value="IPP-2"/>
    <property type="match status" value="1"/>
</dbReference>
<protein>
    <recommendedName>
        <fullName>Protein phosphatase inhibitor 2</fullName>
        <shortName>IPP-2</shortName>
    </recommendedName>
</protein>
<organism>
    <name type="scientific">Bos taurus</name>
    <name type="common">Bovine</name>
    <dbReference type="NCBI Taxonomy" id="9913"/>
    <lineage>
        <taxon>Eukaryota</taxon>
        <taxon>Metazoa</taxon>
        <taxon>Chordata</taxon>
        <taxon>Craniata</taxon>
        <taxon>Vertebrata</taxon>
        <taxon>Euteleostomi</taxon>
        <taxon>Mammalia</taxon>
        <taxon>Eutheria</taxon>
        <taxon>Laurasiatheria</taxon>
        <taxon>Artiodactyla</taxon>
        <taxon>Ruminantia</taxon>
        <taxon>Pecora</taxon>
        <taxon>Bovidae</taxon>
        <taxon>Bovinae</taxon>
        <taxon>Bos</taxon>
    </lineage>
</organism>
<comment type="function">
    <text evidence="1">Inhibitor of protein-phosphatase 1.</text>
</comment>
<comment type="subunit">
    <text evidence="1">Heterodimer with PP1.</text>
</comment>
<comment type="PTM">
    <text evidence="1">Phosphorylation on Ser-44 by ATM activates PP1 by dissociating the PP1-PPP1R2 complex. Phosphorylation on Thr-73 by GSK3 activates PP1 by dissociating the PP1-PPP1R2 complex.</text>
</comment>
<comment type="similarity">
    <text evidence="6">Belongs to the protein phosphatase inhibitor 2 family.</text>
</comment>
<feature type="initiator methionine" description="Removed" evidence="2">
    <location>
        <position position="1"/>
    </location>
</feature>
<feature type="chain" id="PRO_0000286136" description="Protein phosphatase inhibitor 2">
    <location>
        <begin position="2"/>
        <end position="207"/>
    </location>
</feature>
<feature type="region of interest" description="Disordered" evidence="5">
    <location>
        <begin position="1"/>
        <end position="44"/>
    </location>
</feature>
<feature type="region of interest" description="Required for binding PPP1CC" evidence="1">
    <location>
        <begin position="12"/>
        <end position="17"/>
    </location>
</feature>
<feature type="region of interest" description="Required for binding PPP1CC" evidence="1">
    <location>
        <begin position="43"/>
        <end position="55"/>
    </location>
</feature>
<feature type="region of interest" description="Disordered" evidence="5">
    <location>
        <begin position="65"/>
        <end position="97"/>
    </location>
</feature>
<feature type="region of interest" description="Disordered" evidence="5">
    <location>
        <begin position="110"/>
        <end position="146"/>
    </location>
</feature>
<feature type="region of interest" description="Required for binding PPP1CC catalytic center, displacing metal ions and inhibition of PPP1CC catalytic activity" evidence="1">
    <location>
        <begin position="149"/>
        <end position="152"/>
    </location>
</feature>
<feature type="region of interest" description="Disordered" evidence="5">
    <location>
        <begin position="165"/>
        <end position="207"/>
    </location>
</feature>
<feature type="compositionally biased region" description="Low complexity" evidence="5">
    <location>
        <begin position="19"/>
        <end position="28"/>
    </location>
</feature>
<feature type="compositionally biased region" description="Basic and acidic residues" evidence="5">
    <location>
        <begin position="35"/>
        <end position="44"/>
    </location>
</feature>
<feature type="compositionally biased region" description="Acidic residues" evidence="5">
    <location>
        <begin position="80"/>
        <end position="91"/>
    </location>
</feature>
<feature type="compositionally biased region" description="Basic and acidic residues" evidence="5">
    <location>
        <begin position="112"/>
        <end position="122"/>
    </location>
</feature>
<feature type="compositionally biased region" description="Acidic residues" evidence="5">
    <location>
        <begin position="123"/>
        <end position="132"/>
    </location>
</feature>
<feature type="compositionally biased region" description="Basic and acidic residues" evidence="5">
    <location>
        <begin position="133"/>
        <end position="145"/>
    </location>
</feature>
<feature type="compositionally biased region" description="Acidic residues" evidence="5">
    <location>
        <begin position="168"/>
        <end position="177"/>
    </location>
</feature>
<feature type="compositionally biased region" description="Polar residues" evidence="5">
    <location>
        <begin position="187"/>
        <end position="207"/>
    </location>
</feature>
<feature type="modified residue" description="N-acetylalanine" evidence="2">
    <location>
        <position position="2"/>
    </location>
</feature>
<feature type="modified residue" description="Phosphoserine; by ATM" evidence="3">
    <location>
        <position position="44"/>
    </location>
</feature>
<feature type="modified residue" description="Phosphothreonine; by GSK3" evidence="2">
    <location>
        <position position="73"/>
    </location>
</feature>
<feature type="modified residue" description="Phosphoserine" evidence="3">
    <location>
        <position position="87"/>
    </location>
</feature>
<feature type="modified residue" description="Phosphoserine" evidence="4">
    <location>
        <position position="89"/>
    </location>
</feature>
<feature type="modified residue" description="Phosphothreonine" evidence="3">
    <location>
        <position position="92"/>
    </location>
</feature>
<feature type="modified residue" description="Phosphothreonine" evidence="4">
    <location>
        <position position="96"/>
    </location>
</feature>
<feature type="modified residue" description="Phosphoserine" evidence="3">
    <location>
        <position position="123"/>
    </location>
</feature>
<feature type="modified residue" description="Phosphoserine" evidence="3">
    <location>
        <position position="124"/>
    </location>
</feature>
<feature type="modified residue" description="Phosphoserine" evidence="3">
    <location>
        <position position="129"/>
    </location>
</feature>
<feature type="modified residue" description="Phosphoserine" evidence="4">
    <location>
        <position position="132"/>
    </location>
</feature>
<accession>Q3SZX2</accession>
<gene>
    <name type="primary">PPP1R2</name>
</gene>